<organism>
    <name type="scientific">Corynebacterium urealyticum (strain ATCC 43042 / DSM 7109)</name>
    <dbReference type="NCBI Taxonomy" id="504474"/>
    <lineage>
        <taxon>Bacteria</taxon>
        <taxon>Bacillati</taxon>
        <taxon>Actinomycetota</taxon>
        <taxon>Actinomycetes</taxon>
        <taxon>Mycobacteriales</taxon>
        <taxon>Corynebacteriaceae</taxon>
        <taxon>Corynebacterium</taxon>
    </lineage>
</organism>
<dbReference type="EMBL" id="AM942444">
    <property type="protein sequence ID" value="CAQ04499.1"/>
    <property type="molecule type" value="Genomic_DNA"/>
</dbReference>
<dbReference type="RefSeq" id="WP_012359791.1">
    <property type="nucleotide sequence ID" value="NC_010545.1"/>
</dbReference>
<dbReference type="SMR" id="B1VFG0"/>
<dbReference type="STRING" id="504474.cu0539"/>
<dbReference type="GeneID" id="60605339"/>
<dbReference type="KEGG" id="cur:cu0539"/>
<dbReference type="eggNOG" id="COG0238">
    <property type="taxonomic scope" value="Bacteria"/>
</dbReference>
<dbReference type="HOGENOM" id="CLU_148710_1_0_11"/>
<dbReference type="Proteomes" id="UP000001727">
    <property type="component" value="Chromosome"/>
</dbReference>
<dbReference type="GO" id="GO:0022627">
    <property type="term" value="C:cytosolic small ribosomal subunit"/>
    <property type="evidence" value="ECO:0007669"/>
    <property type="project" value="TreeGrafter"/>
</dbReference>
<dbReference type="GO" id="GO:0070181">
    <property type="term" value="F:small ribosomal subunit rRNA binding"/>
    <property type="evidence" value="ECO:0007669"/>
    <property type="project" value="TreeGrafter"/>
</dbReference>
<dbReference type="GO" id="GO:0003735">
    <property type="term" value="F:structural constituent of ribosome"/>
    <property type="evidence" value="ECO:0007669"/>
    <property type="project" value="InterPro"/>
</dbReference>
<dbReference type="GO" id="GO:0006412">
    <property type="term" value="P:translation"/>
    <property type="evidence" value="ECO:0007669"/>
    <property type="project" value="UniProtKB-UniRule"/>
</dbReference>
<dbReference type="FunFam" id="4.10.640.10:FF:000016">
    <property type="entry name" value="30S ribosomal protein S18"/>
    <property type="match status" value="1"/>
</dbReference>
<dbReference type="Gene3D" id="4.10.640.10">
    <property type="entry name" value="Ribosomal protein S18"/>
    <property type="match status" value="1"/>
</dbReference>
<dbReference type="HAMAP" id="MF_00270">
    <property type="entry name" value="Ribosomal_bS18"/>
    <property type="match status" value="1"/>
</dbReference>
<dbReference type="InterPro" id="IPR001648">
    <property type="entry name" value="Ribosomal_bS18"/>
</dbReference>
<dbReference type="InterPro" id="IPR036870">
    <property type="entry name" value="Ribosomal_bS18_sf"/>
</dbReference>
<dbReference type="NCBIfam" id="TIGR00165">
    <property type="entry name" value="S18"/>
    <property type="match status" value="1"/>
</dbReference>
<dbReference type="PANTHER" id="PTHR13479">
    <property type="entry name" value="30S RIBOSOMAL PROTEIN S18"/>
    <property type="match status" value="1"/>
</dbReference>
<dbReference type="PANTHER" id="PTHR13479:SF40">
    <property type="entry name" value="SMALL RIBOSOMAL SUBUNIT PROTEIN BS18M"/>
    <property type="match status" value="1"/>
</dbReference>
<dbReference type="Pfam" id="PF01084">
    <property type="entry name" value="Ribosomal_S18"/>
    <property type="match status" value="1"/>
</dbReference>
<dbReference type="PRINTS" id="PR00974">
    <property type="entry name" value="RIBOSOMALS18"/>
</dbReference>
<dbReference type="SUPFAM" id="SSF46911">
    <property type="entry name" value="Ribosomal protein S18"/>
    <property type="match status" value="1"/>
</dbReference>
<reference key="1">
    <citation type="journal article" date="2008" name="J. Biotechnol.">
        <title>The lifestyle of Corynebacterium urealyticum derived from its complete genome sequence established by pyrosequencing.</title>
        <authorList>
            <person name="Tauch A."/>
            <person name="Trost E."/>
            <person name="Tilker A."/>
            <person name="Ludewig U."/>
            <person name="Schneiker S."/>
            <person name="Goesmann A."/>
            <person name="Arnold W."/>
            <person name="Bekel T."/>
            <person name="Brinkrolf K."/>
            <person name="Brune I."/>
            <person name="Goetker S."/>
            <person name="Kalinowski J."/>
            <person name="Kamp P.-B."/>
            <person name="Lobo F.P."/>
            <person name="Viehoever P."/>
            <person name="Weisshaar B."/>
            <person name="Soriano F."/>
            <person name="Droege M."/>
            <person name="Puehler A."/>
        </authorList>
    </citation>
    <scope>NUCLEOTIDE SEQUENCE [LARGE SCALE GENOMIC DNA]</scope>
    <source>
        <strain>ATCC 43042 / DSM 7109</strain>
    </source>
</reference>
<comment type="function">
    <text evidence="1">Binds as a heterodimer with protein bS6 to the central domain of the 16S rRNA, where it helps stabilize the platform of the 30S subunit.</text>
</comment>
<comment type="subunit">
    <text evidence="1">Part of the 30S ribosomal subunit. Forms a tight heterodimer with protein bS6.</text>
</comment>
<comment type="similarity">
    <text evidence="1">Belongs to the bacterial ribosomal protein bS18 family.</text>
</comment>
<gene>
    <name evidence="1" type="primary">rpsR</name>
    <name type="ordered locus">cu0539</name>
</gene>
<sequence length="82" mass="9686">MKRNNMKRARMEQSRRPKKNPLKAEGIEQVDYKNYALLRKFISDRGKIRSRRVTGLTPQQQREVATAIKNAREMALLPFNSR</sequence>
<keyword id="KW-1185">Reference proteome</keyword>
<keyword id="KW-0687">Ribonucleoprotein</keyword>
<keyword id="KW-0689">Ribosomal protein</keyword>
<keyword id="KW-0694">RNA-binding</keyword>
<keyword id="KW-0699">rRNA-binding</keyword>
<evidence type="ECO:0000255" key="1">
    <source>
        <dbReference type="HAMAP-Rule" id="MF_00270"/>
    </source>
</evidence>
<evidence type="ECO:0000256" key="2">
    <source>
        <dbReference type="SAM" id="MobiDB-lite"/>
    </source>
</evidence>
<evidence type="ECO:0000305" key="3"/>
<name>RS18_CORU7</name>
<feature type="chain" id="PRO_1000114415" description="Small ribosomal subunit protein bS18">
    <location>
        <begin position="1"/>
        <end position="82"/>
    </location>
</feature>
<feature type="region of interest" description="Disordered" evidence="2">
    <location>
        <begin position="1"/>
        <end position="25"/>
    </location>
</feature>
<proteinExistence type="inferred from homology"/>
<accession>B1VFG0</accession>
<protein>
    <recommendedName>
        <fullName evidence="1">Small ribosomal subunit protein bS18</fullName>
    </recommendedName>
    <alternativeName>
        <fullName evidence="3">30S ribosomal protein S18</fullName>
    </alternativeName>
</protein>